<sequence>MQLEKMITEGSNAASAEIDRVSTLEMCRIINDEDKTVPLAVERVLPDIAAAIDVIHTQVSGGGRLIYLGAGTSGRLGILDASECPPTYGVKPGLVVGLIAGGEYAIQHAVEGAEDSREGGVNDLKNIGLTAQDVVVGIAASGRTPYVIAGLEYARQLGCRTVGISCNPGSAVSTTAEFAITPVVGAEVVTGSSRMKAGTAQKLVLNMLSTGLMIKSGKVFGNLMVDVVATNEKLHVRQVNIVKNATGCSAEQAEAALVACERNCKTAIVMVLKNLDAAEAKKRLDQHGGFIRQVLDKE</sequence>
<accession>B7UGC8</accession>
<comment type="function">
    <text evidence="1">Specifically catalyzes the cleavage of the D-lactyl ether substituent of MurNAc 6-phosphate, producing GlcNAc 6-phosphate and D-lactate. Together with AnmK, is also required for the utilization of anhydro-N-acetylmuramic acid (anhMurNAc) either imported from the medium or derived from its own cell wall murein, and thus plays a role in cell wall recycling.</text>
</comment>
<comment type="catalytic activity">
    <reaction evidence="1">
        <text>N-acetyl-D-muramate 6-phosphate + H2O = N-acetyl-D-glucosamine 6-phosphate + (R)-lactate</text>
        <dbReference type="Rhea" id="RHEA:26410"/>
        <dbReference type="ChEBI" id="CHEBI:15377"/>
        <dbReference type="ChEBI" id="CHEBI:16004"/>
        <dbReference type="ChEBI" id="CHEBI:57513"/>
        <dbReference type="ChEBI" id="CHEBI:58722"/>
        <dbReference type="EC" id="4.2.1.126"/>
    </reaction>
</comment>
<comment type="pathway">
    <text evidence="1">Amino-sugar metabolism; 1,6-anhydro-N-acetylmuramate degradation.</text>
</comment>
<comment type="pathway">
    <text evidence="1">Amino-sugar metabolism; N-acetylmuramate degradation.</text>
</comment>
<comment type="pathway">
    <text evidence="1">Cell wall biogenesis; peptidoglycan recycling.</text>
</comment>
<comment type="subunit">
    <text evidence="1">Homodimer.</text>
</comment>
<comment type="induction">
    <text evidence="1">Induced by MurNAc 6-phosphate that releases the repressor MurR from the DNA. Repressed by MurR in the absence of MurNAc 6-phosphate.</text>
</comment>
<comment type="miscellaneous">
    <text evidence="1">A lyase-type mechanism (elimination/hydration) is suggested for the cleavage of the lactyl ether bond of MurNAc 6-phosphate, with the formation of an alpha,beta-unsaturated aldehyde intermediate with (E)-stereochemistry, followed by the syn addition of water to give product.</text>
</comment>
<comment type="similarity">
    <text evidence="1">Belongs to the GCKR-like family. MurNAc-6-P etherase subfamily.</text>
</comment>
<keyword id="KW-0119">Carbohydrate metabolism</keyword>
<keyword id="KW-0456">Lyase</keyword>
<keyword id="KW-1185">Reference proteome</keyword>
<proteinExistence type="inferred from homology"/>
<reference key="1">
    <citation type="journal article" date="2009" name="J. Bacteriol.">
        <title>Complete genome sequence and comparative genome analysis of enteropathogenic Escherichia coli O127:H6 strain E2348/69.</title>
        <authorList>
            <person name="Iguchi A."/>
            <person name="Thomson N.R."/>
            <person name="Ogura Y."/>
            <person name="Saunders D."/>
            <person name="Ooka T."/>
            <person name="Henderson I.R."/>
            <person name="Harris D."/>
            <person name="Asadulghani M."/>
            <person name="Kurokawa K."/>
            <person name="Dean P."/>
            <person name="Kenny B."/>
            <person name="Quail M.A."/>
            <person name="Thurston S."/>
            <person name="Dougan G."/>
            <person name="Hayashi T."/>
            <person name="Parkhill J."/>
            <person name="Frankel G."/>
        </authorList>
    </citation>
    <scope>NUCLEOTIDE SEQUENCE [LARGE SCALE GENOMIC DNA]</scope>
    <source>
        <strain>E2348/69 / EPEC</strain>
    </source>
</reference>
<organism>
    <name type="scientific">Escherichia coli O127:H6 (strain E2348/69 / EPEC)</name>
    <dbReference type="NCBI Taxonomy" id="574521"/>
    <lineage>
        <taxon>Bacteria</taxon>
        <taxon>Pseudomonadati</taxon>
        <taxon>Pseudomonadota</taxon>
        <taxon>Gammaproteobacteria</taxon>
        <taxon>Enterobacterales</taxon>
        <taxon>Enterobacteriaceae</taxon>
        <taxon>Escherichia</taxon>
    </lineage>
</organism>
<feature type="chain" id="PRO_1000118010" description="N-acetylmuramic acid 6-phosphate etherase">
    <location>
        <begin position="1"/>
        <end position="298"/>
    </location>
</feature>
<feature type="domain" description="SIS" evidence="1">
    <location>
        <begin position="55"/>
        <end position="218"/>
    </location>
</feature>
<feature type="active site" description="Proton donor" evidence="1">
    <location>
        <position position="83"/>
    </location>
</feature>
<feature type="active site" evidence="1">
    <location>
        <position position="114"/>
    </location>
</feature>
<protein>
    <recommendedName>
        <fullName evidence="1">N-acetylmuramic acid 6-phosphate etherase</fullName>
        <shortName evidence="1">MurNAc-6-P etherase</shortName>
        <ecNumber evidence="1">4.2.1.126</ecNumber>
    </recommendedName>
    <alternativeName>
        <fullName evidence="1">N-acetylmuramic acid 6-phosphate hydrolase</fullName>
    </alternativeName>
    <alternativeName>
        <fullName evidence="1">N-acetylmuramic acid 6-phosphate lyase</fullName>
    </alternativeName>
</protein>
<evidence type="ECO:0000255" key="1">
    <source>
        <dbReference type="HAMAP-Rule" id="MF_00068"/>
    </source>
</evidence>
<name>MURQ_ECO27</name>
<dbReference type="EC" id="4.2.1.126" evidence="1"/>
<dbReference type="EMBL" id="FM180568">
    <property type="protein sequence ID" value="CAS10161.1"/>
    <property type="molecule type" value="Genomic_DNA"/>
</dbReference>
<dbReference type="RefSeq" id="WP_001175631.1">
    <property type="nucleotide sequence ID" value="NC_011601.1"/>
</dbReference>
<dbReference type="SMR" id="B7UGC8"/>
<dbReference type="KEGG" id="ecg:E2348C_2613"/>
<dbReference type="HOGENOM" id="CLU_049049_1_1_6"/>
<dbReference type="UniPathway" id="UPA00342"/>
<dbReference type="UniPathway" id="UPA00343"/>
<dbReference type="UniPathway" id="UPA00544"/>
<dbReference type="Proteomes" id="UP000008205">
    <property type="component" value="Chromosome"/>
</dbReference>
<dbReference type="GO" id="GO:0097367">
    <property type="term" value="F:carbohydrate derivative binding"/>
    <property type="evidence" value="ECO:0007669"/>
    <property type="project" value="InterPro"/>
</dbReference>
<dbReference type="GO" id="GO:0016835">
    <property type="term" value="F:carbon-oxygen lyase activity"/>
    <property type="evidence" value="ECO:0007669"/>
    <property type="project" value="UniProtKB-UniRule"/>
</dbReference>
<dbReference type="GO" id="GO:0016803">
    <property type="term" value="F:ether hydrolase activity"/>
    <property type="evidence" value="ECO:0007669"/>
    <property type="project" value="TreeGrafter"/>
</dbReference>
<dbReference type="GO" id="GO:0097175">
    <property type="term" value="P:1,6-anhydro-N-acetyl-beta-muramic acid catabolic process"/>
    <property type="evidence" value="ECO:0007669"/>
    <property type="project" value="UniProtKB-UniRule"/>
</dbReference>
<dbReference type="GO" id="GO:0046348">
    <property type="term" value="P:amino sugar catabolic process"/>
    <property type="evidence" value="ECO:0007669"/>
    <property type="project" value="InterPro"/>
</dbReference>
<dbReference type="GO" id="GO:0097173">
    <property type="term" value="P:N-acetylmuramic acid catabolic process"/>
    <property type="evidence" value="ECO:0007669"/>
    <property type="project" value="UniProtKB-UniPathway"/>
</dbReference>
<dbReference type="GO" id="GO:0009254">
    <property type="term" value="P:peptidoglycan turnover"/>
    <property type="evidence" value="ECO:0007669"/>
    <property type="project" value="UniProtKB-UniRule"/>
</dbReference>
<dbReference type="CDD" id="cd05007">
    <property type="entry name" value="SIS_Etherase"/>
    <property type="match status" value="1"/>
</dbReference>
<dbReference type="FunFam" id="1.10.8.1080:FF:000001">
    <property type="entry name" value="N-acetylmuramic acid 6-phosphate etherase"/>
    <property type="match status" value="1"/>
</dbReference>
<dbReference type="FunFam" id="3.40.50.10490:FF:000014">
    <property type="entry name" value="N-acetylmuramic acid 6-phosphate etherase"/>
    <property type="match status" value="1"/>
</dbReference>
<dbReference type="Gene3D" id="1.10.8.1080">
    <property type="match status" value="1"/>
</dbReference>
<dbReference type="Gene3D" id="3.40.50.10490">
    <property type="entry name" value="Glucose-6-phosphate isomerase like protein, domain 1"/>
    <property type="match status" value="1"/>
</dbReference>
<dbReference type="HAMAP" id="MF_00068">
    <property type="entry name" value="MurQ"/>
    <property type="match status" value="1"/>
</dbReference>
<dbReference type="InterPro" id="IPR005488">
    <property type="entry name" value="Etherase_MurQ"/>
</dbReference>
<dbReference type="InterPro" id="IPR005486">
    <property type="entry name" value="Glucokinase_regulatory_CS"/>
</dbReference>
<dbReference type="InterPro" id="IPR040190">
    <property type="entry name" value="MURQ/GCKR"/>
</dbReference>
<dbReference type="InterPro" id="IPR001347">
    <property type="entry name" value="SIS_dom"/>
</dbReference>
<dbReference type="InterPro" id="IPR046348">
    <property type="entry name" value="SIS_dom_sf"/>
</dbReference>
<dbReference type="NCBIfam" id="TIGR00274">
    <property type="entry name" value="N-acetylmuramic acid 6-phosphate etherase"/>
    <property type="match status" value="1"/>
</dbReference>
<dbReference type="NCBIfam" id="NF003915">
    <property type="entry name" value="PRK05441.1"/>
    <property type="match status" value="1"/>
</dbReference>
<dbReference type="NCBIfam" id="NF009222">
    <property type="entry name" value="PRK12570.1"/>
    <property type="match status" value="1"/>
</dbReference>
<dbReference type="PANTHER" id="PTHR10088">
    <property type="entry name" value="GLUCOKINASE REGULATORY PROTEIN"/>
    <property type="match status" value="1"/>
</dbReference>
<dbReference type="PANTHER" id="PTHR10088:SF4">
    <property type="entry name" value="GLUCOKINASE REGULATORY PROTEIN"/>
    <property type="match status" value="1"/>
</dbReference>
<dbReference type="Pfam" id="PF20741">
    <property type="entry name" value="GKRP-like_C"/>
    <property type="match status" value="1"/>
</dbReference>
<dbReference type="Pfam" id="PF22645">
    <property type="entry name" value="GKRP_SIS_N"/>
    <property type="match status" value="1"/>
</dbReference>
<dbReference type="SUPFAM" id="SSF53697">
    <property type="entry name" value="SIS domain"/>
    <property type="match status" value="1"/>
</dbReference>
<dbReference type="PROSITE" id="PS01272">
    <property type="entry name" value="GCKR"/>
    <property type="match status" value="1"/>
</dbReference>
<dbReference type="PROSITE" id="PS51464">
    <property type="entry name" value="SIS"/>
    <property type="match status" value="1"/>
</dbReference>
<gene>
    <name evidence="1" type="primary">murQ</name>
    <name type="ordered locus">E2348C_2613</name>
</gene>